<proteinExistence type="evidence at transcript level"/>
<sequence length="148" mass="16944">MFALRSIRSATKAFQTTSIVSQRGFLQTTLKNVLFPTERQLRRQYLADNHIKVGSPEFDKFYEDLQPSELSKQSGLSDALLDDPILHICVIKYNKNIVQRYNLTPEQEKDIMENYNVSAGDPSLEQILPIPVPAHIFEELPIVKVLNN</sequence>
<feature type="transit peptide" description="Mitochondrion">
    <location>
        <begin position="1"/>
        <end position="24"/>
    </location>
</feature>
<feature type="chain" id="PRO_0000006078" description="Cytochrome c oxidase subunit 4, mitochondrial">
    <location>
        <begin position="25"/>
        <end position="148"/>
    </location>
</feature>
<feature type="sequence conflict" description="In Ref. 1; CAA39205." evidence="1" ref="1">
    <original>P</original>
    <variation>G</variation>
    <location>
        <position position="56"/>
    </location>
</feature>
<feature type="sequence conflict" description="In Ref. 1; CAA39205." evidence="1" ref="1">
    <original>I</original>
    <variation>V</variation>
    <location>
        <position position="136"/>
    </location>
</feature>
<keyword id="KW-0472">Membrane</keyword>
<keyword id="KW-0496">Mitochondrion</keyword>
<keyword id="KW-0999">Mitochondrion inner membrane</keyword>
<keyword id="KW-1185">Reference proteome</keyword>
<keyword id="KW-0809">Transit peptide</keyword>
<keyword id="KW-1278">Translocase</keyword>
<reference key="1">
    <citation type="journal article" date="1991" name="Biochim. Biophys. Acta">
        <title>Nucleotide sequence of a cDNA coding for the mitochondrial precursor protein of cytochrome c oxidase subunit IV from the slime mold Dictyostelium discoideum.</title>
        <authorList>
            <person name="Rizzuto R."/>
            <person name="Sandona D."/>
            <person name="Capaldi R.A."/>
            <person name="Bisson R."/>
        </authorList>
    </citation>
    <scope>NUCLEOTIDE SEQUENCE [MRNA]</scope>
    <source>
        <strain>AX3</strain>
    </source>
</reference>
<reference key="2">
    <citation type="journal article" date="2005" name="Nature">
        <title>The genome of the social amoeba Dictyostelium discoideum.</title>
        <authorList>
            <person name="Eichinger L."/>
            <person name="Pachebat J.A."/>
            <person name="Gloeckner G."/>
            <person name="Rajandream M.A."/>
            <person name="Sucgang R."/>
            <person name="Berriman M."/>
            <person name="Song J."/>
            <person name="Olsen R."/>
            <person name="Szafranski K."/>
            <person name="Xu Q."/>
            <person name="Tunggal B."/>
            <person name="Kummerfeld S."/>
            <person name="Madera M."/>
            <person name="Konfortov B.A."/>
            <person name="Rivero F."/>
            <person name="Bankier A.T."/>
            <person name="Lehmann R."/>
            <person name="Hamlin N."/>
            <person name="Davies R."/>
            <person name="Gaudet P."/>
            <person name="Fey P."/>
            <person name="Pilcher K."/>
            <person name="Chen G."/>
            <person name="Saunders D."/>
            <person name="Sodergren E.J."/>
            <person name="Davis P."/>
            <person name="Kerhornou A."/>
            <person name="Nie X."/>
            <person name="Hall N."/>
            <person name="Anjard C."/>
            <person name="Hemphill L."/>
            <person name="Bason N."/>
            <person name="Farbrother P."/>
            <person name="Desany B."/>
            <person name="Just E."/>
            <person name="Morio T."/>
            <person name="Rost R."/>
            <person name="Churcher C.M."/>
            <person name="Cooper J."/>
            <person name="Haydock S."/>
            <person name="van Driessche N."/>
            <person name="Cronin A."/>
            <person name="Goodhead I."/>
            <person name="Muzny D.M."/>
            <person name="Mourier T."/>
            <person name="Pain A."/>
            <person name="Lu M."/>
            <person name="Harper D."/>
            <person name="Lindsay R."/>
            <person name="Hauser H."/>
            <person name="James K.D."/>
            <person name="Quiles M."/>
            <person name="Madan Babu M."/>
            <person name="Saito T."/>
            <person name="Buchrieser C."/>
            <person name="Wardroper A."/>
            <person name="Felder M."/>
            <person name="Thangavelu M."/>
            <person name="Johnson D."/>
            <person name="Knights A."/>
            <person name="Loulseged H."/>
            <person name="Mungall K.L."/>
            <person name="Oliver K."/>
            <person name="Price C."/>
            <person name="Quail M.A."/>
            <person name="Urushihara H."/>
            <person name="Hernandez J."/>
            <person name="Rabbinowitsch E."/>
            <person name="Steffen D."/>
            <person name="Sanders M."/>
            <person name="Ma J."/>
            <person name="Kohara Y."/>
            <person name="Sharp S."/>
            <person name="Simmonds M.N."/>
            <person name="Spiegler S."/>
            <person name="Tivey A."/>
            <person name="Sugano S."/>
            <person name="White B."/>
            <person name="Walker D."/>
            <person name="Woodward J.R."/>
            <person name="Winckler T."/>
            <person name="Tanaka Y."/>
            <person name="Shaulsky G."/>
            <person name="Schleicher M."/>
            <person name="Weinstock G.M."/>
            <person name="Rosenthal A."/>
            <person name="Cox E.C."/>
            <person name="Chisholm R.L."/>
            <person name="Gibbs R.A."/>
            <person name="Loomis W.F."/>
            <person name="Platzer M."/>
            <person name="Kay R.R."/>
            <person name="Williams J.G."/>
            <person name="Dear P.H."/>
            <person name="Noegel A.A."/>
            <person name="Barrell B.G."/>
            <person name="Kuspa A."/>
        </authorList>
    </citation>
    <scope>NUCLEOTIDE SEQUENCE [LARGE SCALE GENOMIC DNA]</scope>
    <source>
        <strain>AX4</strain>
    </source>
</reference>
<protein>
    <recommendedName>
        <fullName>Cytochrome c oxidase subunit 4, mitochondrial</fullName>
        <ecNumber>7.1.1.9</ecNumber>
    </recommendedName>
    <alternativeName>
        <fullName>Cytochrome c oxidase polypeptide IV</fullName>
    </alternativeName>
</protein>
<dbReference type="EC" id="7.1.1.9"/>
<dbReference type="EMBL" id="X55670">
    <property type="protein sequence ID" value="CAA39205.2"/>
    <property type="molecule type" value="mRNA"/>
</dbReference>
<dbReference type="EMBL" id="AAFI02000041">
    <property type="protein sequence ID" value="EAL66678.1"/>
    <property type="molecule type" value="Genomic_DNA"/>
</dbReference>
<dbReference type="PIR" id="S17660">
    <property type="entry name" value="S17660"/>
</dbReference>
<dbReference type="RefSeq" id="XP_640649.1">
    <property type="nucleotide sequence ID" value="XM_635557.1"/>
</dbReference>
<dbReference type="SMR" id="P30815"/>
<dbReference type="FunCoup" id="P30815">
    <property type="interactions" value="744"/>
</dbReference>
<dbReference type="STRING" id="44689.P30815"/>
<dbReference type="PaxDb" id="44689-DDB0214995"/>
<dbReference type="EnsemblProtists" id="EAL66678">
    <property type="protein sequence ID" value="EAL66678"/>
    <property type="gene ID" value="DDB_G0281393"/>
</dbReference>
<dbReference type="GeneID" id="8623033"/>
<dbReference type="KEGG" id="ddi:DDB_G0281393"/>
<dbReference type="dictyBase" id="DDB_G0281393">
    <property type="gene designation" value="cxdA"/>
</dbReference>
<dbReference type="VEuPathDB" id="AmoebaDB:DDB_G0281393"/>
<dbReference type="eggNOG" id="ENOG502RHIJ">
    <property type="taxonomic scope" value="Eukaryota"/>
</dbReference>
<dbReference type="HOGENOM" id="CLU_1762187_0_0_1"/>
<dbReference type="InParanoid" id="P30815"/>
<dbReference type="OMA" id="PILHICV"/>
<dbReference type="PRO" id="PR:P30815"/>
<dbReference type="Proteomes" id="UP000002195">
    <property type="component" value="Chromosome 3"/>
</dbReference>
<dbReference type="GO" id="GO:0005743">
    <property type="term" value="C:mitochondrial inner membrane"/>
    <property type="evidence" value="ECO:0007669"/>
    <property type="project" value="UniProtKB-SubCell"/>
</dbReference>
<dbReference type="GO" id="GO:0004129">
    <property type="term" value="F:cytochrome-c oxidase activity"/>
    <property type="evidence" value="ECO:0007669"/>
    <property type="project" value="UniProtKB-EC"/>
</dbReference>
<name>COX4_DICDI</name>
<comment type="function">
    <text>This protein is one of the nuclear-coded polypeptide chains of cytochrome c oxidase, the terminal oxidase in mitochondrial electron transport.</text>
</comment>
<comment type="catalytic activity">
    <reaction>
        <text>4 Fe(II)-[cytochrome c] + O2 + 8 H(+)(in) = 4 Fe(III)-[cytochrome c] + 2 H2O + 4 H(+)(out)</text>
        <dbReference type="Rhea" id="RHEA:11436"/>
        <dbReference type="Rhea" id="RHEA-COMP:10350"/>
        <dbReference type="Rhea" id="RHEA-COMP:14399"/>
        <dbReference type="ChEBI" id="CHEBI:15377"/>
        <dbReference type="ChEBI" id="CHEBI:15378"/>
        <dbReference type="ChEBI" id="CHEBI:15379"/>
        <dbReference type="ChEBI" id="CHEBI:29033"/>
        <dbReference type="ChEBI" id="CHEBI:29034"/>
        <dbReference type="EC" id="7.1.1.9"/>
    </reaction>
</comment>
<comment type="subunit">
    <text>Slime mold cytochrome c oxidase consists of at least seven different polypeptides species, subunits I, II, III, IV, V, VI, and VIIe/s in order of MW.</text>
</comment>
<comment type="subcellular location">
    <subcellularLocation>
        <location>Mitochondrion inner membrane</location>
    </subcellularLocation>
</comment>
<organism>
    <name type="scientific">Dictyostelium discoideum</name>
    <name type="common">Social amoeba</name>
    <dbReference type="NCBI Taxonomy" id="44689"/>
    <lineage>
        <taxon>Eukaryota</taxon>
        <taxon>Amoebozoa</taxon>
        <taxon>Evosea</taxon>
        <taxon>Eumycetozoa</taxon>
        <taxon>Dictyostelia</taxon>
        <taxon>Dictyosteliales</taxon>
        <taxon>Dictyosteliaceae</taxon>
        <taxon>Dictyostelium</taxon>
    </lineage>
</organism>
<accession>P30815</accession>
<accession>Q54U12</accession>
<evidence type="ECO:0000305" key="1"/>
<gene>
    <name type="primary">cxdA</name>
    <name type="synonym">cox4</name>
    <name type="ORF">DDB_G0281393</name>
</gene>